<reference key="1">
    <citation type="journal article" date="2009" name="J. Bacteriol.">
        <title>Complete genome sequence and comparative genome analysis of enteropathogenic Escherichia coli O127:H6 strain E2348/69.</title>
        <authorList>
            <person name="Iguchi A."/>
            <person name="Thomson N.R."/>
            <person name="Ogura Y."/>
            <person name="Saunders D."/>
            <person name="Ooka T."/>
            <person name="Henderson I.R."/>
            <person name="Harris D."/>
            <person name="Asadulghani M."/>
            <person name="Kurokawa K."/>
            <person name="Dean P."/>
            <person name="Kenny B."/>
            <person name="Quail M.A."/>
            <person name="Thurston S."/>
            <person name="Dougan G."/>
            <person name="Hayashi T."/>
            <person name="Parkhill J."/>
            <person name="Frankel G."/>
        </authorList>
    </citation>
    <scope>NUCLEOTIDE SEQUENCE [LARGE SCALE GENOMIC DNA]</scope>
    <source>
        <strain>E2348/69 / EPEC</strain>
    </source>
</reference>
<protein>
    <recommendedName>
        <fullName evidence="1">Probable GTP-binding protein EngB</fullName>
    </recommendedName>
</protein>
<accession>B7UNI7</accession>
<evidence type="ECO:0000255" key="1">
    <source>
        <dbReference type="HAMAP-Rule" id="MF_00321"/>
    </source>
</evidence>
<feature type="chain" id="PRO_1000189921" description="Probable GTP-binding protein EngB">
    <location>
        <begin position="1"/>
        <end position="210"/>
    </location>
</feature>
<feature type="domain" description="EngB-type G" evidence="1">
    <location>
        <begin position="25"/>
        <end position="199"/>
    </location>
</feature>
<feature type="binding site" evidence="1">
    <location>
        <begin position="33"/>
        <end position="40"/>
    </location>
    <ligand>
        <name>GTP</name>
        <dbReference type="ChEBI" id="CHEBI:37565"/>
    </ligand>
</feature>
<feature type="binding site" evidence="1">
    <location>
        <position position="40"/>
    </location>
    <ligand>
        <name>Mg(2+)</name>
        <dbReference type="ChEBI" id="CHEBI:18420"/>
    </ligand>
</feature>
<feature type="binding site" evidence="1">
    <location>
        <begin position="60"/>
        <end position="64"/>
    </location>
    <ligand>
        <name>GTP</name>
        <dbReference type="ChEBI" id="CHEBI:37565"/>
    </ligand>
</feature>
<feature type="binding site" evidence="1">
    <location>
        <position position="62"/>
    </location>
    <ligand>
        <name>Mg(2+)</name>
        <dbReference type="ChEBI" id="CHEBI:18420"/>
    </ligand>
</feature>
<feature type="binding site" evidence="1">
    <location>
        <begin position="78"/>
        <end position="81"/>
    </location>
    <ligand>
        <name>GTP</name>
        <dbReference type="ChEBI" id="CHEBI:37565"/>
    </ligand>
</feature>
<feature type="binding site" evidence="1">
    <location>
        <begin position="145"/>
        <end position="148"/>
    </location>
    <ligand>
        <name>GTP</name>
        <dbReference type="ChEBI" id="CHEBI:37565"/>
    </ligand>
</feature>
<feature type="binding site" evidence="1">
    <location>
        <begin position="178"/>
        <end position="180"/>
    </location>
    <ligand>
        <name>GTP</name>
        <dbReference type="ChEBI" id="CHEBI:37565"/>
    </ligand>
</feature>
<keyword id="KW-0131">Cell cycle</keyword>
<keyword id="KW-0132">Cell division</keyword>
<keyword id="KW-0342">GTP-binding</keyword>
<keyword id="KW-0460">Magnesium</keyword>
<keyword id="KW-0479">Metal-binding</keyword>
<keyword id="KW-0547">Nucleotide-binding</keyword>
<keyword id="KW-1185">Reference proteome</keyword>
<keyword id="KW-0717">Septation</keyword>
<dbReference type="EMBL" id="FM180568">
    <property type="protein sequence ID" value="CAS11719.1"/>
    <property type="molecule type" value="Genomic_DNA"/>
</dbReference>
<dbReference type="SMR" id="B7UNI7"/>
<dbReference type="KEGG" id="ecg:E2348C_4171"/>
<dbReference type="HOGENOM" id="CLU_033732_1_2_6"/>
<dbReference type="Proteomes" id="UP000008205">
    <property type="component" value="Chromosome"/>
</dbReference>
<dbReference type="GO" id="GO:0005829">
    <property type="term" value="C:cytosol"/>
    <property type="evidence" value="ECO:0007669"/>
    <property type="project" value="TreeGrafter"/>
</dbReference>
<dbReference type="GO" id="GO:0005525">
    <property type="term" value="F:GTP binding"/>
    <property type="evidence" value="ECO:0007669"/>
    <property type="project" value="UniProtKB-UniRule"/>
</dbReference>
<dbReference type="GO" id="GO:0046872">
    <property type="term" value="F:metal ion binding"/>
    <property type="evidence" value="ECO:0007669"/>
    <property type="project" value="UniProtKB-KW"/>
</dbReference>
<dbReference type="GO" id="GO:0000917">
    <property type="term" value="P:division septum assembly"/>
    <property type="evidence" value="ECO:0007669"/>
    <property type="project" value="UniProtKB-KW"/>
</dbReference>
<dbReference type="CDD" id="cd01876">
    <property type="entry name" value="YihA_EngB"/>
    <property type="match status" value="1"/>
</dbReference>
<dbReference type="FunFam" id="3.40.50.300:FF:000098">
    <property type="entry name" value="Probable GTP-binding protein EngB"/>
    <property type="match status" value="1"/>
</dbReference>
<dbReference type="Gene3D" id="3.40.50.300">
    <property type="entry name" value="P-loop containing nucleotide triphosphate hydrolases"/>
    <property type="match status" value="1"/>
</dbReference>
<dbReference type="HAMAP" id="MF_00321">
    <property type="entry name" value="GTPase_EngB"/>
    <property type="match status" value="1"/>
</dbReference>
<dbReference type="InterPro" id="IPR030393">
    <property type="entry name" value="G_ENGB_dom"/>
</dbReference>
<dbReference type="InterPro" id="IPR006073">
    <property type="entry name" value="GTP-bd"/>
</dbReference>
<dbReference type="InterPro" id="IPR019987">
    <property type="entry name" value="GTP-bd_ribosome_bio_YsxC"/>
</dbReference>
<dbReference type="InterPro" id="IPR027417">
    <property type="entry name" value="P-loop_NTPase"/>
</dbReference>
<dbReference type="NCBIfam" id="TIGR03598">
    <property type="entry name" value="GTPase_YsxC"/>
    <property type="match status" value="1"/>
</dbReference>
<dbReference type="PANTHER" id="PTHR11649:SF13">
    <property type="entry name" value="ENGB-TYPE G DOMAIN-CONTAINING PROTEIN"/>
    <property type="match status" value="1"/>
</dbReference>
<dbReference type="PANTHER" id="PTHR11649">
    <property type="entry name" value="MSS1/TRME-RELATED GTP-BINDING PROTEIN"/>
    <property type="match status" value="1"/>
</dbReference>
<dbReference type="Pfam" id="PF01926">
    <property type="entry name" value="MMR_HSR1"/>
    <property type="match status" value="1"/>
</dbReference>
<dbReference type="SUPFAM" id="SSF52540">
    <property type="entry name" value="P-loop containing nucleoside triphosphate hydrolases"/>
    <property type="match status" value="1"/>
</dbReference>
<dbReference type="PROSITE" id="PS51706">
    <property type="entry name" value="G_ENGB"/>
    <property type="match status" value="1"/>
</dbReference>
<organism>
    <name type="scientific">Escherichia coli O127:H6 (strain E2348/69 / EPEC)</name>
    <dbReference type="NCBI Taxonomy" id="574521"/>
    <lineage>
        <taxon>Bacteria</taxon>
        <taxon>Pseudomonadati</taxon>
        <taxon>Pseudomonadota</taxon>
        <taxon>Gammaproteobacteria</taxon>
        <taxon>Enterobacterales</taxon>
        <taxon>Enterobacteriaceae</taxon>
        <taxon>Escherichia</taxon>
    </lineage>
</organism>
<sequence length="210" mass="23561">MTNLNYQQTHFVMSAPDIRHLPSDTGIEVAFAGRSNAGKSSALNTLTNQKSLARTSKTPGRTQLINLFEVADGKRLVDLPGYGYAEVPEEMKRKWQRALGEYLEKRQSLQGLVVLMDIRHPLKDLDQQMIEWAVDSNIAVLVLLTKADKLASGARKAQLNMVREAVLAFNGDVQVETFSSLKKQGVDKLRQKLDTWFSEMQPVEETQDGE</sequence>
<proteinExistence type="inferred from homology"/>
<gene>
    <name evidence="1" type="primary">engB</name>
    <name type="ordered locus">E2348C_4171</name>
</gene>
<comment type="function">
    <text evidence="1">Necessary for normal cell division and for the maintenance of normal septation.</text>
</comment>
<comment type="cofactor">
    <cofactor evidence="1">
        <name>Mg(2+)</name>
        <dbReference type="ChEBI" id="CHEBI:18420"/>
    </cofactor>
</comment>
<comment type="similarity">
    <text evidence="1">Belongs to the TRAFAC class TrmE-Era-EngA-EngB-Septin-like GTPase superfamily. EngB GTPase family.</text>
</comment>
<name>ENGB_ECO27</name>